<proteinExistence type="inferred from homology"/>
<sequence>MEPDRQTDIAALDSTLTTVERVLDVEGLRTRIEKLEHEASDPKLWDDQVRAQRVTSELSHAQGELRRIEELRRRLDDLPVLYELAAEERAAAAASGMEAFAEADAELKALRVDIEATEVRTLLSGEYDEREALITIRSGAGGVDAADWAEMLMRMYIRWAEQHKYGVEVLDTSYAEEAGVKSATFAVHAPFAYGTLASEQGTHRLVRISPFDNQSRRQTSFAEVEVLPVVEITDHIDIPEGDVRVDVYRSSGPGGQSVNTTDSAVRLTHVPTGLVVTCQNEKSQLQNKVSAMRVLQAKLLERKRLEERAELDALKGRGGSSWGNQIRSYVLHPYQMVKDLRNEYEVGNPTAVLDGDIDGFLEAGIRWRNRRDIS</sequence>
<gene>
    <name evidence="1" type="primary">prfB</name>
    <name type="ordered locus">MLBr00667</name>
</gene>
<accession>B8ZUV0</accession>
<dbReference type="EMBL" id="FM211192">
    <property type="protein sequence ID" value="CAR70761.1"/>
    <property type="molecule type" value="Genomic_DNA"/>
</dbReference>
<dbReference type="SMR" id="B8ZUV0"/>
<dbReference type="KEGG" id="mlb:MLBr00667"/>
<dbReference type="HOGENOM" id="CLU_036856_0_1_11"/>
<dbReference type="Proteomes" id="UP000006900">
    <property type="component" value="Chromosome"/>
</dbReference>
<dbReference type="GO" id="GO:0005737">
    <property type="term" value="C:cytoplasm"/>
    <property type="evidence" value="ECO:0007669"/>
    <property type="project" value="UniProtKB-SubCell"/>
</dbReference>
<dbReference type="GO" id="GO:0016149">
    <property type="term" value="F:translation release factor activity, codon specific"/>
    <property type="evidence" value="ECO:0007669"/>
    <property type="project" value="UniProtKB-UniRule"/>
</dbReference>
<dbReference type="FunFam" id="3.30.160.20:FF:000010">
    <property type="entry name" value="Peptide chain release factor 2"/>
    <property type="match status" value="1"/>
</dbReference>
<dbReference type="Gene3D" id="3.30.160.20">
    <property type="match status" value="1"/>
</dbReference>
<dbReference type="Gene3D" id="3.30.70.1660">
    <property type="match status" value="1"/>
</dbReference>
<dbReference type="Gene3D" id="1.20.58.410">
    <property type="entry name" value="Release factor"/>
    <property type="match status" value="1"/>
</dbReference>
<dbReference type="HAMAP" id="MF_00094">
    <property type="entry name" value="Rel_fac_2"/>
    <property type="match status" value="1"/>
</dbReference>
<dbReference type="InterPro" id="IPR005139">
    <property type="entry name" value="PCRF"/>
</dbReference>
<dbReference type="InterPro" id="IPR000352">
    <property type="entry name" value="Pep_chain_release_fac_I"/>
</dbReference>
<dbReference type="InterPro" id="IPR045853">
    <property type="entry name" value="Pep_chain_release_fac_I_sf"/>
</dbReference>
<dbReference type="InterPro" id="IPR004374">
    <property type="entry name" value="PrfB"/>
</dbReference>
<dbReference type="NCBIfam" id="TIGR00020">
    <property type="entry name" value="prfB"/>
    <property type="match status" value="1"/>
</dbReference>
<dbReference type="PANTHER" id="PTHR43116:SF3">
    <property type="entry name" value="CLASS I PEPTIDE CHAIN RELEASE FACTOR"/>
    <property type="match status" value="1"/>
</dbReference>
<dbReference type="PANTHER" id="PTHR43116">
    <property type="entry name" value="PEPTIDE CHAIN RELEASE FACTOR 2"/>
    <property type="match status" value="1"/>
</dbReference>
<dbReference type="Pfam" id="PF03462">
    <property type="entry name" value="PCRF"/>
    <property type="match status" value="1"/>
</dbReference>
<dbReference type="Pfam" id="PF00472">
    <property type="entry name" value="RF-1"/>
    <property type="match status" value="1"/>
</dbReference>
<dbReference type="SMART" id="SM00937">
    <property type="entry name" value="PCRF"/>
    <property type="match status" value="1"/>
</dbReference>
<dbReference type="SUPFAM" id="SSF75620">
    <property type="entry name" value="Release factor"/>
    <property type="match status" value="1"/>
</dbReference>
<dbReference type="PROSITE" id="PS00745">
    <property type="entry name" value="RF_PROK_I"/>
    <property type="match status" value="1"/>
</dbReference>
<comment type="function">
    <text evidence="1">Peptide chain release factor 2 directs the termination of translation in response to the peptide chain termination codons UGA and UAA.</text>
</comment>
<comment type="subcellular location">
    <subcellularLocation>
        <location evidence="1">Cytoplasm</location>
    </subcellularLocation>
</comment>
<comment type="PTM">
    <text evidence="1">Methylated by PrmC. Methylation increases the termination efficiency of RF2.</text>
</comment>
<comment type="similarity">
    <text evidence="1">Belongs to the prokaryotic/mitochondrial release factor family.</text>
</comment>
<evidence type="ECO:0000255" key="1">
    <source>
        <dbReference type="HAMAP-Rule" id="MF_00094"/>
    </source>
</evidence>
<name>RF2_MYCLB</name>
<organism>
    <name type="scientific">Mycobacterium leprae (strain Br4923)</name>
    <dbReference type="NCBI Taxonomy" id="561304"/>
    <lineage>
        <taxon>Bacteria</taxon>
        <taxon>Bacillati</taxon>
        <taxon>Actinomycetota</taxon>
        <taxon>Actinomycetes</taxon>
        <taxon>Mycobacteriales</taxon>
        <taxon>Mycobacteriaceae</taxon>
        <taxon>Mycobacterium</taxon>
    </lineage>
</organism>
<protein>
    <recommendedName>
        <fullName evidence="1">Peptide chain release factor 2</fullName>
        <shortName evidence="1">RF-2</shortName>
    </recommendedName>
</protein>
<reference key="1">
    <citation type="journal article" date="2009" name="Nat. Genet.">
        <title>Comparative genomic and phylogeographic analysis of Mycobacterium leprae.</title>
        <authorList>
            <person name="Monot M."/>
            <person name="Honore N."/>
            <person name="Garnier T."/>
            <person name="Zidane N."/>
            <person name="Sherafi D."/>
            <person name="Paniz-Mondolfi A."/>
            <person name="Matsuoka M."/>
            <person name="Taylor G.M."/>
            <person name="Donoghue H.D."/>
            <person name="Bouwman A."/>
            <person name="Mays S."/>
            <person name="Watson C."/>
            <person name="Lockwood D."/>
            <person name="Khamispour A."/>
            <person name="Dowlati Y."/>
            <person name="Jianping S."/>
            <person name="Rea T.H."/>
            <person name="Vera-Cabrera L."/>
            <person name="Stefani M.M."/>
            <person name="Banu S."/>
            <person name="Macdonald M."/>
            <person name="Sapkota B.R."/>
            <person name="Spencer J.S."/>
            <person name="Thomas J."/>
            <person name="Harshman K."/>
            <person name="Singh P."/>
            <person name="Busso P."/>
            <person name="Gattiker A."/>
            <person name="Rougemont J."/>
            <person name="Brennan P.J."/>
            <person name="Cole S.T."/>
        </authorList>
    </citation>
    <scope>NUCLEOTIDE SEQUENCE [LARGE SCALE GENOMIC DNA]</scope>
    <source>
        <strain>Br4923</strain>
    </source>
</reference>
<feature type="chain" id="PRO_1000193555" description="Peptide chain release factor 2">
    <location>
        <begin position="1"/>
        <end position="374"/>
    </location>
</feature>
<feature type="modified residue" description="N5-methylglutamine" evidence="1">
    <location>
        <position position="256"/>
    </location>
</feature>
<keyword id="KW-0963">Cytoplasm</keyword>
<keyword id="KW-0488">Methylation</keyword>
<keyword id="KW-0648">Protein biosynthesis</keyword>